<name>TMAR_GLAP5</name>
<gene>
    <name evidence="1" type="primary">tmaR</name>
    <name type="ordered locus">HAPS_0398</name>
</gene>
<evidence type="ECO:0000255" key="1">
    <source>
        <dbReference type="HAMAP-Rule" id="MF_00683"/>
    </source>
</evidence>
<accession>B8F426</accession>
<dbReference type="EMBL" id="CP001321">
    <property type="protein sequence ID" value="ACL32078.1"/>
    <property type="molecule type" value="Genomic_DNA"/>
</dbReference>
<dbReference type="RefSeq" id="WP_005712575.1">
    <property type="nucleotide sequence ID" value="NC_011852.1"/>
</dbReference>
<dbReference type="SMR" id="B8F426"/>
<dbReference type="STRING" id="557723.HAPS_0398"/>
<dbReference type="KEGG" id="hap:HAPS_0398"/>
<dbReference type="HOGENOM" id="CLU_153146_0_0_6"/>
<dbReference type="Proteomes" id="UP000006743">
    <property type="component" value="Chromosome"/>
</dbReference>
<dbReference type="GO" id="GO:0005829">
    <property type="term" value="C:cytosol"/>
    <property type="evidence" value="ECO:0007669"/>
    <property type="project" value="TreeGrafter"/>
</dbReference>
<dbReference type="HAMAP" id="MF_00683">
    <property type="entry name" value="Pole_loc_TmaR"/>
    <property type="match status" value="1"/>
</dbReference>
<dbReference type="InterPro" id="IPR007458">
    <property type="entry name" value="DUF496"/>
</dbReference>
<dbReference type="NCBIfam" id="NF003844">
    <property type="entry name" value="PRK05423.1"/>
    <property type="match status" value="1"/>
</dbReference>
<dbReference type="PANTHER" id="PTHR39591">
    <property type="entry name" value="UPF0265 PROTEIN YEEX"/>
    <property type="match status" value="1"/>
</dbReference>
<dbReference type="PANTHER" id="PTHR39591:SF1">
    <property type="entry name" value="UPF0265 PROTEIN YEEX"/>
    <property type="match status" value="1"/>
</dbReference>
<dbReference type="Pfam" id="PF04363">
    <property type="entry name" value="DUF496"/>
    <property type="match status" value="1"/>
</dbReference>
<dbReference type="PIRSF" id="PIRSF028773">
    <property type="entry name" value="UCP028773"/>
    <property type="match status" value="1"/>
</dbReference>
<sequence>MENSKKQSFQDMLDYVHLYRLKNKLLRETADNDRKIRDNQKRILLLDNLNQYITDNMSIQDIRVIIGNMRDDYENRVDDYAIRNAELSKERREIRRKMAEHSSKK</sequence>
<proteinExistence type="inferred from homology"/>
<protein>
    <recommendedName>
        <fullName evidence="1">Pole-localizer protein TmaR</fullName>
    </recommendedName>
</protein>
<organism>
    <name type="scientific">Glaesserella parasuis serovar 5 (strain SH0165)</name>
    <name type="common">Haemophilus parasuis</name>
    <dbReference type="NCBI Taxonomy" id="557723"/>
    <lineage>
        <taxon>Bacteria</taxon>
        <taxon>Pseudomonadati</taxon>
        <taxon>Pseudomonadota</taxon>
        <taxon>Gammaproteobacteria</taxon>
        <taxon>Pasteurellales</taxon>
        <taxon>Pasteurellaceae</taxon>
        <taxon>Glaesserella</taxon>
    </lineage>
</organism>
<comment type="function">
    <text evidence="1">Pole-localizer protein involved in the regulation of several cellular processes.</text>
</comment>
<comment type="subcellular location">
    <subcellularLocation>
        <location evidence="1">Cytoplasm</location>
    </subcellularLocation>
</comment>
<comment type="similarity">
    <text evidence="1">Belongs to the pole-localizer TmaR family.</text>
</comment>
<keyword id="KW-0175">Coiled coil</keyword>
<keyword id="KW-0963">Cytoplasm</keyword>
<keyword id="KW-1185">Reference proteome</keyword>
<feature type="chain" id="PRO_1000147741" description="Pole-localizer protein TmaR">
    <location>
        <begin position="1"/>
        <end position="105"/>
    </location>
</feature>
<feature type="coiled-coil region" evidence="1">
    <location>
        <begin position="70"/>
        <end position="104"/>
    </location>
</feature>
<reference key="1">
    <citation type="journal article" date="2009" name="J. Bacteriol.">
        <title>Complete genome sequence of Haemophilus parasuis SH0165.</title>
        <authorList>
            <person name="Yue M."/>
            <person name="Yang F."/>
            <person name="Yang J."/>
            <person name="Bei W."/>
            <person name="Cai X."/>
            <person name="Chen L."/>
            <person name="Dong J."/>
            <person name="Zhou R."/>
            <person name="Jin M."/>
            <person name="Jin Q."/>
            <person name="Chen H."/>
        </authorList>
    </citation>
    <scope>NUCLEOTIDE SEQUENCE [LARGE SCALE GENOMIC DNA]</scope>
    <source>
        <strain>SH0165</strain>
    </source>
</reference>